<sequence>MNLFTDFEARIKTALEQIDLVREKRSELDFGRIAVEPPRDASHGDVATNAAMVLAKPLGTNPRALADIIIAKLREDADVADVSVAGPGFINIRLAVGYWQRLLAAMIGAGTDYGRSTLGEGRKVNVEYVSANPTGPMHVGHCRGAVVGDALANLLAFAGYGVEKEYYINDAGSQIDVLARSVFLRYREALGEKIGEIPSGLYPGDYLVPVGQSLAADYGVRLHNMPEDQWMPIVKDRTIDAMMVMIREDLASLNVHHDIFFSERTLHANGAAAIRTAINDLTFKGYVYKGTLPPPKGQLPEDWEDREQTLFRSTEVGDDMDRPLIKSDGSYTYFAADVAYFKNKFDRGFDEMIYVLGADHGGYVKRLEAVARGVSDGKAKLTVLLCQLVKLYRNGEPVKMSKRSGDFVTLRDVVEEVGSDSVRFMMLYRKNSEPLDFDFAKVTEQSKDNPVFYVQYAHARCMSVFRQAREAFGDLDVSPEEFAQTVAGIGDPAELQLVAKLAEFPRIVEAAAQSQEPHRLAFYLYDLASSFHAHWNKGKDQPELRFVNDKNRESTIARLGLVYAVASVLKSGLAITGTAAPDEMR</sequence>
<proteinExistence type="inferred from homology"/>
<dbReference type="EC" id="6.1.1.19" evidence="1"/>
<dbReference type="EMBL" id="CP001191">
    <property type="protein sequence ID" value="ACI54774.1"/>
    <property type="molecule type" value="Genomic_DNA"/>
</dbReference>
<dbReference type="RefSeq" id="WP_012557480.1">
    <property type="nucleotide sequence ID" value="NC_011369.1"/>
</dbReference>
<dbReference type="SMR" id="B5ZMF2"/>
<dbReference type="STRING" id="395492.Rleg2_1482"/>
<dbReference type="KEGG" id="rlt:Rleg2_1482"/>
<dbReference type="eggNOG" id="COG0018">
    <property type="taxonomic scope" value="Bacteria"/>
</dbReference>
<dbReference type="HOGENOM" id="CLU_006406_0_1_5"/>
<dbReference type="Proteomes" id="UP000008330">
    <property type="component" value="Chromosome"/>
</dbReference>
<dbReference type="GO" id="GO:0005737">
    <property type="term" value="C:cytoplasm"/>
    <property type="evidence" value="ECO:0007669"/>
    <property type="project" value="UniProtKB-SubCell"/>
</dbReference>
<dbReference type="GO" id="GO:0004814">
    <property type="term" value="F:arginine-tRNA ligase activity"/>
    <property type="evidence" value="ECO:0007669"/>
    <property type="project" value="UniProtKB-UniRule"/>
</dbReference>
<dbReference type="GO" id="GO:0005524">
    <property type="term" value="F:ATP binding"/>
    <property type="evidence" value="ECO:0007669"/>
    <property type="project" value="UniProtKB-UniRule"/>
</dbReference>
<dbReference type="GO" id="GO:0006420">
    <property type="term" value="P:arginyl-tRNA aminoacylation"/>
    <property type="evidence" value="ECO:0007669"/>
    <property type="project" value="UniProtKB-UniRule"/>
</dbReference>
<dbReference type="CDD" id="cd00671">
    <property type="entry name" value="ArgRS_core"/>
    <property type="match status" value="1"/>
</dbReference>
<dbReference type="FunFam" id="1.10.730.10:FF:000008">
    <property type="entry name" value="Arginine--tRNA ligase"/>
    <property type="match status" value="1"/>
</dbReference>
<dbReference type="Gene3D" id="3.30.1360.70">
    <property type="entry name" value="Arginyl tRNA synthetase N-terminal domain"/>
    <property type="match status" value="1"/>
</dbReference>
<dbReference type="Gene3D" id="3.40.50.620">
    <property type="entry name" value="HUPs"/>
    <property type="match status" value="1"/>
</dbReference>
<dbReference type="Gene3D" id="1.10.730.10">
    <property type="entry name" value="Isoleucyl-tRNA Synthetase, Domain 1"/>
    <property type="match status" value="1"/>
</dbReference>
<dbReference type="HAMAP" id="MF_00123">
    <property type="entry name" value="Arg_tRNA_synth"/>
    <property type="match status" value="1"/>
</dbReference>
<dbReference type="InterPro" id="IPR001412">
    <property type="entry name" value="aa-tRNA-synth_I_CS"/>
</dbReference>
<dbReference type="InterPro" id="IPR001278">
    <property type="entry name" value="Arg-tRNA-ligase"/>
</dbReference>
<dbReference type="InterPro" id="IPR005148">
    <property type="entry name" value="Arg-tRNA-synth_N"/>
</dbReference>
<dbReference type="InterPro" id="IPR036695">
    <property type="entry name" value="Arg-tRNA-synth_N_sf"/>
</dbReference>
<dbReference type="InterPro" id="IPR035684">
    <property type="entry name" value="ArgRS_core"/>
</dbReference>
<dbReference type="InterPro" id="IPR008909">
    <property type="entry name" value="DALR_anticod-bd"/>
</dbReference>
<dbReference type="InterPro" id="IPR014729">
    <property type="entry name" value="Rossmann-like_a/b/a_fold"/>
</dbReference>
<dbReference type="InterPro" id="IPR009080">
    <property type="entry name" value="tRNAsynth_Ia_anticodon-bd"/>
</dbReference>
<dbReference type="NCBIfam" id="TIGR00456">
    <property type="entry name" value="argS"/>
    <property type="match status" value="1"/>
</dbReference>
<dbReference type="PANTHER" id="PTHR11956:SF5">
    <property type="entry name" value="ARGININE--TRNA LIGASE, CYTOPLASMIC"/>
    <property type="match status" value="1"/>
</dbReference>
<dbReference type="PANTHER" id="PTHR11956">
    <property type="entry name" value="ARGINYL-TRNA SYNTHETASE"/>
    <property type="match status" value="1"/>
</dbReference>
<dbReference type="Pfam" id="PF03485">
    <property type="entry name" value="Arg_tRNA_synt_N"/>
    <property type="match status" value="1"/>
</dbReference>
<dbReference type="Pfam" id="PF05746">
    <property type="entry name" value="DALR_1"/>
    <property type="match status" value="1"/>
</dbReference>
<dbReference type="Pfam" id="PF00750">
    <property type="entry name" value="tRNA-synt_1d"/>
    <property type="match status" value="2"/>
</dbReference>
<dbReference type="PRINTS" id="PR01038">
    <property type="entry name" value="TRNASYNTHARG"/>
</dbReference>
<dbReference type="SMART" id="SM01016">
    <property type="entry name" value="Arg_tRNA_synt_N"/>
    <property type="match status" value="1"/>
</dbReference>
<dbReference type="SMART" id="SM00836">
    <property type="entry name" value="DALR_1"/>
    <property type="match status" value="1"/>
</dbReference>
<dbReference type="SUPFAM" id="SSF47323">
    <property type="entry name" value="Anticodon-binding domain of a subclass of class I aminoacyl-tRNA synthetases"/>
    <property type="match status" value="1"/>
</dbReference>
<dbReference type="SUPFAM" id="SSF55190">
    <property type="entry name" value="Arginyl-tRNA synthetase (ArgRS), N-terminal 'additional' domain"/>
    <property type="match status" value="1"/>
</dbReference>
<dbReference type="SUPFAM" id="SSF52374">
    <property type="entry name" value="Nucleotidylyl transferase"/>
    <property type="match status" value="1"/>
</dbReference>
<dbReference type="PROSITE" id="PS00178">
    <property type="entry name" value="AA_TRNA_LIGASE_I"/>
    <property type="match status" value="1"/>
</dbReference>
<gene>
    <name evidence="1" type="primary">argS</name>
    <name type="ordered locus">Rleg2_1482</name>
</gene>
<accession>B5ZMF2</accession>
<keyword id="KW-0030">Aminoacyl-tRNA synthetase</keyword>
<keyword id="KW-0067">ATP-binding</keyword>
<keyword id="KW-0963">Cytoplasm</keyword>
<keyword id="KW-0436">Ligase</keyword>
<keyword id="KW-0547">Nucleotide-binding</keyword>
<keyword id="KW-0648">Protein biosynthesis</keyword>
<keyword id="KW-1185">Reference proteome</keyword>
<evidence type="ECO:0000255" key="1">
    <source>
        <dbReference type="HAMAP-Rule" id="MF_00123"/>
    </source>
</evidence>
<feature type="chain" id="PRO_1000095397" description="Arginine--tRNA ligase">
    <location>
        <begin position="1"/>
        <end position="585"/>
    </location>
</feature>
<feature type="short sequence motif" description="'HIGH' region">
    <location>
        <begin position="131"/>
        <end position="141"/>
    </location>
</feature>
<organism>
    <name type="scientific">Rhizobium leguminosarum bv. trifolii (strain WSM2304)</name>
    <dbReference type="NCBI Taxonomy" id="395492"/>
    <lineage>
        <taxon>Bacteria</taxon>
        <taxon>Pseudomonadati</taxon>
        <taxon>Pseudomonadota</taxon>
        <taxon>Alphaproteobacteria</taxon>
        <taxon>Hyphomicrobiales</taxon>
        <taxon>Rhizobiaceae</taxon>
        <taxon>Rhizobium/Agrobacterium group</taxon>
        <taxon>Rhizobium</taxon>
    </lineage>
</organism>
<protein>
    <recommendedName>
        <fullName evidence="1">Arginine--tRNA ligase</fullName>
        <ecNumber evidence="1">6.1.1.19</ecNumber>
    </recommendedName>
    <alternativeName>
        <fullName evidence="1">Arginyl-tRNA synthetase</fullName>
        <shortName evidence="1">ArgRS</shortName>
    </alternativeName>
</protein>
<reference key="1">
    <citation type="journal article" date="2010" name="Stand. Genomic Sci.">
        <title>Complete genome sequence of Rhizobium leguminosarum bv trifolii strain WSM2304, an effective microsymbiont of the South American clover Trifolium polymorphum.</title>
        <authorList>
            <person name="Reeve W."/>
            <person name="O'Hara G."/>
            <person name="Chain P."/>
            <person name="Ardley J."/>
            <person name="Brau L."/>
            <person name="Nandesena K."/>
            <person name="Tiwari R."/>
            <person name="Malfatti S."/>
            <person name="Kiss H."/>
            <person name="Lapidus A."/>
            <person name="Copeland A."/>
            <person name="Nolan M."/>
            <person name="Land M."/>
            <person name="Ivanova N."/>
            <person name="Mavromatis K."/>
            <person name="Markowitz V."/>
            <person name="Kyrpides N."/>
            <person name="Melino V."/>
            <person name="Denton M."/>
            <person name="Yates R."/>
            <person name="Howieson J."/>
        </authorList>
    </citation>
    <scope>NUCLEOTIDE SEQUENCE [LARGE SCALE GENOMIC DNA]</scope>
    <source>
        <strain>WSM2304</strain>
    </source>
</reference>
<comment type="catalytic activity">
    <reaction evidence="1">
        <text>tRNA(Arg) + L-arginine + ATP = L-arginyl-tRNA(Arg) + AMP + diphosphate</text>
        <dbReference type="Rhea" id="RHEA:20301"/>
        <dbReference type="Rhea" id="RHEA-COMP:9658"/>
        <dbReference type="Rhea" id="RHEA-COMP:9673"/>
        <dbReference type="ChEBI" id="CHEBI:30616"/>
        <dbReference type="ChEBI" id="CHEBI:32682"/>
        <dbReference type="ChEBI" id="CHEBI:33019"/>
        <dbReference type="ChEBI" id="CHEBI:78442"/>
        <dbReference type="ChEBI" id="CHEBI:78513"/>
        <dbReference type="ChEBI" id="CHEBI:456215"/>
        <dbReference type="EC" id="6.1.1.19"/>
    </reaction>
</comment>
<comment type="subunit">
    <text evidence="1">Monomer.</text>
</comment>
<comment type="subcellular location">
    <subcellularLocation>
        <location evidence="1">Cytoplasm</location>
    </subcellularLocation>
</comment>
<comment type="similarity">
    <text evidence="1">Belongs to the class-I aminoacyl-tRNA synthetase family.</text>
</comment>
<name>SYR_RHILW</name>